<proteinExistence type="inferred from homology"/>
<protein>
    <recommendedName>
        <fullName>Exotoxin type G</fullName>
    </recommendedName>
    <alternativeName>
        <fullName>Pyrogenic exotoxin G</fullName>
    </alternativeName>
    <alternativeName>
        <fullName>SPE G</fullName>
    </alternativeName>
</protein>
<sequence>MKTNILTIIILSCVFSYGSQLAYADENLKDLKRSLRFAYNITPCDYENVEIAFVTTNSIHINTKQKRSECILYVDSIVSLGITDQFIKGDKVDVFGLPYNFSPPYVDNIYGGIVKHSNQGNKSLQFVGILNQDGKETYLPSEVVRIKKKQFTLQEFDLKIRKFLMEKYNIYDSESRYTSGSLFLATKDSKHYEVDLFNKDDKLLSRDSFFKRYKDNKIFNSEEISHFDIYLKTY</sequence>
<reference key="1">
    <citation type="journal article" date="2003" name="Genome Res.">
        <title>Genome sequence of an M3 strain of Streptococcus pyogenes reveals a large-scale genomic rearrangement in invasive strains and new insights into phage evolution.</title>
        <authorList>
            <person name="Nakagawa I."/>
            <person name="Kurokawa K."/>
            <person name="Yamashita A."/>
            <person name="Nakata M."/>
            <person name="Tomiyasu Y."/>
            <person name="Okahashi N."/>
            <person name="Kawabata S."/>
            <person name="Yamazaki K."/>
            <person name="Shiba T."/>
            <person name="Yasunaga T."/>
            <person name="Hayashi H."/>
            <person name="Hattori M."/>
            <person name="Hamada S."/>
        </authorList>
    </citation>
    <scope>NUCLEOTIDE SEQUENCE [LARGE SCALE GENOMIC DNA]</scope>
    <source>
        <strain>SSI-1</strain>
    </source>
</reference>
<evidence type="ECO:0000250" key="1"/>
<evidence type="ECO:0000255" key="2"/>
<evidence type="ECO:0000305" key="3"/>
<feature type="signal peptide" evidence="2">
    <location>
        <begin position="1"/>
        <end position="24"/>
    </location>
</feature>
<feature type="chain" id="PRO_0000411594" description="Exotoxin type G">
    <location>
        <begin position="25"/>
        <end position="234"/>
    </location>
</feature>
<keyword id="KW-0732">Signal</keyword>
<keyword id="KW-0800">Toxin</keyword>
<keyword id="KW-0843">Virulence</keyword>
<comment type="function">
    <text evidence="1">Mitogenic for human peripheral blood lymphocytes.</text>
</comment>
<comment type="miscellaneous">
    <text evidence="1">Binds to major histocompatibility complex class II beta chain.</text>
</comment>
<comment type="similarity">
    <text evidence="3">Belongs to the staphylococcal/streptococcal toxin family.</text>
</comment>
<accession>P0DG09</accession>
<accession>Q79YK9</accession>
<accession>Q8K8Q7</accession>
<name>SPEG_STRPQ</name>
<dbReference type="EMBL" id="BA000034">
    <property type="protein sequence ID" value="BAC63256.1"/>
    <property type="molecule type" value="Genomic_DNA"/>
</dbReference>
<dbReference type="RefSeq" id="WP_011054152.1">
    <property type="nucleotide sequence ID" value="NC_004606.1"/>
</dbReference>
<dbReference type="SMR" id="P0DG09"/>
<dbReference type="KEGG" id="sps:SPs0161"/>
<dbReference type="HOGENOM" id="CLU_093855_1_0_9"/>
<dbReference type="GO" id="GO:0005576">
    <property type="term" value="C:extracellular region"/>
    <property type="evidence" value="ECO:0007669"/>
    <property type="project" value="InterPro"/>
</dbReference>
<dbReference type="GO" id="GO:0090729">
    <property type="term" value="F:toxin activity"/>
    <property type="evidence" value="ECO:0007669"/>
    <property type="project" value="UniProtKB-KW"/>
</dbReference>
<dbReference type="Gene3D" id="2.40.50.110">
    <property type="match status" value="1"/>
</dbReference>
<dbReference type="Gene3D" id="3.10.20.120">
    <property type="match status" value="1"/>
</dbReference>
<dbReference type="InterPro" id="IPR008992">
    <property type="entry name" value="Enterotoxin"/>
</dbReference>
<dbReference type="InterPro" id="IPR006126">
    <property type="entry name" value="Staph/Strept_toxin_CS"/>
</dbReference>
<dbReference type="InterPro" id="IPR006173">
    <property type="entry name" value="Staph_tox_OB"/>
</dbReference>
<dbReference type="InterPro" id="IPR016091">
    <property type="entry name" value="SuperAg_toxin_C"/>
</dbReference>
<dbReference type="InterPro" id="IPR013307">
    <property type="entry name" value="Superantigen_bac"/>
</dbReference>
<dbReference type="InterPro" id="IPR006123">
    <property type="entry name" value="Toxin_b-grasp_Staph/Strep"/>
</dbReference>
<dbReference type="InterPro" id="IPR006177">
    <property type="entry name" value="Toxin_bac"/>
</dbReference>
<dbReference type="Pfam" id="PF02876">
    <property type="entry name" value="Stap_Strp_tox_C"/>
    <property type="match status" value="1"/>
</dbReference>
<dbReference type="Pfam" id="PF01123">
    <property type="entry name" value="Stap_Strp_toxin"/>
    <property type="match status" value="1"/>
</dbReference>
<dbReference type="PRINTS" id="PR00279">
    <property type="entry name" value="BACTRLTOXIN"/>
</dbReference>
<dbReference type="PRINTS" id="PR01898">
    <property type="entry name" value="SAGSUPRFAMLY"/>
</dbReference>
<dbReference type="SUPFAM" id="SSF50203">
    <property type="entry name" value="Bacterial enterotoxins"/>
    <property type="match status" value="1"/>
</dbReference>
<dbReference type="SUPFAM" id="SSF54334">
    <property type="entry name" value="Superantigen toxins, C-terminal domain"/>
    <property type="match status" value="1"/>
</dbReference>
<dbReference type="PROSITE" id="PS00278">
    <property type="entry name" value="STAPH_STREP_TOXIN_2"/>
    <property type="match status" value="1"/>
</dbReference>
<gene>
    <name type="primary">speG</name>
    <name type="ordered locus">SPs0161</name>
</gene>
<organism>
    <name type="scientific">Streptococcus pyogenes serotype M3 (strain SSI-1)</name>
    <dbReference type="NCBI Taxonomy" id="193567"/>
    <lineage>
        <taxon>Bacteria</taxon>
        <taxon>Bacillati</taxon>
        <taxon>Bacillota</taxon>
        <taxon>Bacilli</taxon>
        <taxon>Lactobacillales</taxon>
        <taxon>Streptococcaceae</taxon>
        <taxon>Streptococcus</taxon>
    </lineage>
</organism>